<evidence type="ECO:0000255" key="1">
    <source>
        <dbReference type="HAMAP-Rule" id="MF_01279"/>
    </source>
</evidence>
<organism>
    <name type="scientific">Colwellia psychrerythraea (strain 34H / ATCC BAA-681)</name>
    <name type="common">Vibrio psychroerythus</name>
    <dbReference type="NCBI Taxonomy" id="167879"/>
    <lineage>
        <taxon>Bacteria</taxon>
        <taxon>Pseudomonadati</taxon>
        <taxon>Pseudomonadota</taxon>
        <taxon>Gammaproteobacteria</taxon>
        <taxon>Alteromonadales</taxon>
        <taxon>Colwelliaceae</taxon>
        <taxon>Colwellia</taxon>
    </lineage>
</organism>
<dbReference type="EC" id="3.4.13.9" evidence="1"/>
<dbReference type="EMBL" id="CP000083">
    <property type="protein sequence ID" value="AAZ26309.1"/>
    <property type="molecule type" value="Genomic_DNA"/>
</dbReference>
<dbReference type="RefSeq" id="WP_011040903.1">
    <property type="nucleotide sequence ID" value="NC_003910.7"/>
</dbReference>
<dbReference type="SMR" id="Q48AT5"/>
<dbReference type="STRING" id="167879.CPS_0013"/>
<dbReference type="KEGG" id="cps:CPS_0013"/>
<dbReference type="eggNOG" id="COG0006">
    <property type="taxonomic scope" value="Bacteria"/>
</dbReference>
<dbReference type="HOGENOM" id="CLU_050675_0_0_6"/>
<dbReference type="Proteomes" id="UP000000547">
    <property type="component" value="Chromosome"/>
</dbReference>
<dbReference type="GO" id="GO:0005829">
    <property type="term" value="C:cytosol"/>
    <property type="evidence" value="ECO:0007669"/>
    <property type="project" value="TreeGrafter"/>
</dbReference>
<dbReference type="GO" id="GO:0004177">
    <property type="term" value="F:aminopeptidase activity"/>
    <property type="evidence" value="ECO:0007669"/>
    <property type="project" value="TreeGrafter"/>
</dbReference>
<dbReference type="GO" id="GO:0046872">
    <property type="term" value="F:metal ion binding"/>
    <property type="evidence" value="ECO:0007669"/>
    <property type="project" value="UniProtKB-KW"/>
</dbReference>
<dbReference type="GO" id="GO:0008235">
    <property type="term" value="F:metalloexopeptidase activity"/>
    <property type="evidence" value="ECO:0007669"/>
    <property type="project" value="UniProtKB-UniRule"/>
</dbReference>
<dbReference type="GO" id="GO:0016795">
    <property type="term" value="F:phosphoric triester hydrolase activity"/>
    <property type="evidence" value="ECO:0007669"/>
    <property type="project" value="InterPro"/>
</dbReference>
<dbReference type="GO" id="GO:0102009">
    <property type="term" value="F:proline dipeptidase activity"/>
    <property type="evidence" value="ECO:0007669"/>
    <property type="project" value="UniProtKB-EC"/>
</dbReference>
<dbReference type="GO" id="GO:0006508">
    <property type="term" value="P:proteolysis"/>
    <property type="evidence" value="ECO:0007669"/>
    <property type="project" value="UniProtKB-KW"/>
</dbReference>
<dbReference type="Gene3D" id="3.90.230.10">
    <property type="entry name" value="Creatinase/methionine aminopeptidase superfamily"/>
    <property type="match status" value="1"/>
</dbReference>
<dbReference type="Gene3D" id="3.40.350.10">
    <property type="entry name" value="Creatinase/prolidase N-terminal domain"/>
    <property type="match status" value="1"/>
</dbReference>
<dbReference type="HAMAP" id="MF_01279">
    <property type="entry name" value="X_Pro_dipeptid"/>
    <property type="match status" value="1"/>
</dbReference>
<dbReference type="InterPro" id="IPR029149">
    <property type="entry name" value="Creatin/AminoP/Spt16_N"/>
</dbReference>
<dbReference type="InterPro" id="IPR036005">
    <property type="entry name" value="Creatinase/aminopeptidase-like"/>
</dbReference>
<dbReference type="InterPro" id="IPR048819">
    <property type="entry name" value="PepQ_N"/>
</dbReference>
<dbReference type="InterPro" id="IPR000994">
    <property type="entry name" value="Pept_M24"/>
</dbReference>
<dbReference type="InterPro" id="IPR001131">
    <property type="entry name" value="Peptidase_M24B_aminopep-P_CS"/>
</dbReference>
<dbReference type="InterPro" id="IPR052433">
    <property type="entry name" value="X-Pro_dipept-like"/>
</dbReference>
<dbReference type="InterPro" id="IPR022846">
    <property type="entry name" value="X_Pro_dipept"/>
</dbReference>
<dbReference type="NCBIfam" id="NF010133">
    <property type="entry name" value="PRK13607.1"/>
    <property type="match status" value="1"/>
</dbReference>
<dbReference type="PANTHER" id="PTHR43226">
    <property type="entry name" value="XAA-PRO AMINOPEPTIDASE 3"/>
    <property type="match status" value="1"/>
</dbReference>
<dbReference type="PANTHER" id="PTHR43226:SF8">
    <property type="entry name" value="XAA-PRO DIPEPTIDASE"/>
    <property type="match status" value="1"/>
</dbReference>
<dbReference type="Pfam" id="PF21216">
    <property type="entry name" value="PepQ_N"/>
    <property type="match status" value="1"/>
</dbReference>
<dbReference type="Pfam" id="PF00557">
    <property type="entry name" value="Peptidase_M24"/>
    <property type="match status" value="1"/>
</dbReference>
<dbReference type="SUPFAM" id="SSF55920">
    <property type="entry name" value="Creatinase/aminopeptidase"/>
    <property type="match status" value="1"/>
</dbReference>
<dbReference type="PROSITE" id="PS00491">
    <property type="entry name" value="PROLINE_PEPTIDASE"/>
    <property type="match status" value="1"/>
</dbReference>
<comment type="function">
    <text evidence="1">Splits dipeptides with a prolyl residue in the C-terminal position.</text>
</comment>
<comment type="catalytic activity">
    <reaction evidence="1">
        <text>Xaa-L-Pro dipeptide + H2O = an L-alpha-amino acid + L-proline</text>
        <dbReference type="Rhea" id="RHEA:76407"/>
        <dbReference type="ChEBI" id="CHEBI:15377"/>
        <dbReference type="ChEBI" id="CHEBI:59869"/>
        <dbReference type="ChEBI" id="CHEBI:60039"/>
        <dbReference type="ChEBI" id="CHEBI:195196"/>
        <dbReference type="EC" id="3.4.13.9"/>
    </reaction>
</comment>
<comment type="cofactor">
    <cofactor evidence="1">
        <name>Mn(2+)</name>
        <dbReference type="ChEBI" id="CHEBI:29035"/>
    </cofactor>
    <text evidence="1">Binds 2 manganese ions per subunit.</text>
</comment>
<comment type="similarity">
    <text evidence="1">Belongs to the peptidase M24B family. Bacterial-type prolidase subfamily.</text>
</comment>
<reference key="1">
    <citation type="journal article" date="2005" name="Proc. Natl. Acad. Sci. U.S.A.">
        <title>The psychrophilic lifestyle as revealed by the genome sequence of Colwellia psychrerythraea 34H through genomic and proteomic analyses.</title>
        <authorList>
            <person name="Methe B.A."/>
            <person name="Nelson K.E."/>
            <person name="Deming J.W."/>
            <person name="Momen B."/>
            <person name="Melamud E."/>
            <person name="Zhang X."/>
            <person name="Moult J."/>
            <person name="Madupu R."/>
            <person name="Nelson W.C."/>
            <person name="Dodson R.J."/>
            <person name="Brinkac L.M."/>
            <person name="Daugherty S.C."/>
            <person name="Durkin A.S."/>
            <person name="DeBoy R.T."/>
            <person name="Kolonay J.F."/>
            <person name="Sullivan S.A."/>
            <person name="Zhou L."/>
            <person name="Davidsen T.M."/>
            <person name="Wu M."/>
            <person name="Huston A.L."/>
            <person name="Lewis M."/>
            <person name="Weaver B."/>
            <person name="Weidman J.F."/>
            <person name="Khouri H."/>
            <person name="Utterback T.R."/>
            <person name="Feldblyum T.V."/>
            <person name="Fraser C.M."/>
        </authorList>
    </citation>
    <scope>NUCLEOTIDE SEQUENCE [LARGE SCALE GENOMIC DNA]</scope>
    <source>
        <strain>34H / ATCC BAA-681</strain>
    </source>
</reference>
<accession>Q48AT5</accession>
<sequence>MTTLNAKLASQYPAHIAQLQQMTKSVLSRENLEGLVIHSGQEVKAFLDDNCYPFKVNPHFKYWLPLIDIPNSWLVVNGEDKPTLIYYQPVDFWHKVTPLAESYWGEFFNIKILTKASEVDKLLPYDKKGFAYIGSHIEVATALGFEAINPEPLLNYVHYHRGYKSKYEHECLRQSNALAVKAHQAARNAFLQGDSEYDIQQAYLKSIGYGTNDTPYGNIVALNKNCSILHYMSLDKMTPQVHQSFLIDAGANFNGYSADITRTYSYKNDKFAELIARMDQLMLNAVAGLKPGVSYVDLHIETHRAIGQVLRDFNFINVDADTAVESGIISTFFPHGLGHHLGLQVHDVGGFMADERGTHVNTPAEHPFLRTSRVIETNQVFTIEPGLYFIDSLLADLKASANADQVNWQNVDEMRCFGGIRIEDNIIVHQSHNENMTRDLGLS</sequence>
<feature type="chain" id="PRO_0000303839" description="Xaa-Pro dipeptidase">
    <location>
        <begin position="1"/>
        <end position="443"/>
    </location>
</feature>
<feature type="binding site" evidence="1">
    <location>
        <position position="248"/>
    </location>
    <ligand>
        <name>Mn(2+)</name>
        <dbReference type="ChEBI" id="CHEBI:29035"/>
        <label>2</label>
    </ligand>
</feature>
<feature type="binding site" evidence="1">
    <location>
        <position position="259"/>
    </location>
    <ligand>
        <name>Mn(2+)</name>
        <dbReference type="ChEBI" id="CHEBI:29035"/>
        <label>1</label>
    </ligand>
</feature>
<feature type="binding site" evidence="1">
    <location>
        <position position="259"/>
    </location>
    <ligand>
        <name>Mn(2+)</name>
        <dbReference type="ChEBI" id="CHEBI:29035"/>
        <label>2</label>
    </ligand>
</feature>
<feature type="binding site" evidence="1">
    <location>
        <position position="339"/>
    </location>
    <ligand>
        <name>Mn(2+)</name>
        <dbReference type="ChEBI" id="CHEBI:29035"/>
        <label>1</label>
    </ligand>
</feature>
<feature type="binding site" evidence="1">
    <location>
        <position position="384"/>
    </location>
    <ligand>
        <name>Mn(2+)</name>
        <dbReference type="ChEBI" id="CHEBI:29035"/>
        <label>1</label>
    </ligand>
</feature>
<feature type="binding site" evidence="1">
    <location>
        <position position="423"/>
    </location>
    <ligand>
        <name>Mn(2+)</name>
        <dbReference type="ChEBI" id="CHEBI:29035"/>
        <label>1</label>
    </ligand>
</feature>
<feature type="binding site" evidence="1">
    <location>
        <position position="423"/>
    </location>
    <ligand>
        <name>Mn(2+)</name>
        <dbReference type="ChEBI" id="CHEBI:29035"/>
        <label>2</label>
    </ligand>
</feature>
<proteinExistence type="inferred from homology"/>
<protein>
    <recommendedName>
        <fullName evidence="1">Xaa-Pro dipeptidase</fullName>
        <shortName evidence="1">X-Pro dipeptidase</shortName>
        <ecNumber evidence="1">3.4.13.9</ecNumber>
    </recommendedName>
    <alternativeName>
        <fullName evidence="1">Imidodipeptidase</fullName>
    </alternativeName>
    <alternativeName>
        <fullName evidence="1">Proline dipeptidase</fullName>
        <shortName evidence="1">Prolidase</shortName>
    </alternativeName>
</protein>
<name>PEPQ_COLP3</name>
<keyword id="KW-0224">Dipeptidase</keyword>
<keyword id="KW-0378">Hydrolase</keyword>
<keyword id="KW-0464">Manganese</keyword>
<keyword id="KW-0479">Metal-binding</keyword>
<keyword id="KW-0482">Metalloprotease</keyword>
<keyword id="KW-0645">Protease</keyword>
<gene>
    <name evidence="1" type="primary">pepQ</name>
    <name type="ordered locus">CPS_0013</name>
</gene>